<feature type="chain" id="PRO_1000101100" description="Lysine--tRNA ligase">
    <location>
        <begin position="1"/>
        <end position="508"/>
    </location>
</feature>
<feature type="binding site" evidence="1">
    <location>
        <position position="418"/>
    </location>
    <ligand>
        <name>Mg(2+)</name>
        <dbReference type="ChEBI" id="CHEBI:18420"/>
        <label>1</label>
    </ligand>
</feature>
<feature type="binding site" evidence="1">
    <location>
        <position position="425"/>
    </location>
    <ligand>
        <name>Mg(2+)</name>
        <dbReference type="ChEBI" id="CHEBI:18420"/>
        <label>1</label>
    </ligand>
</feature>
<feature type="binding site" evidence="1">
    <location>
        <position position="425"/>
    </location>
    <ligand>
        <name>Mg(2+)</name>
        <dbReference type="ChEBI" id="CHEBI:18420"/>
        <label>2</label>
    </ligand>
</feature>
<evidence type="ECO:0000255" key="1">
    <source>
        <dbReference type="HAMAP-Rule" id="MF_00252"/>
    </source>
</evidence>
<keyword id="KW-0030">Aminoacyl-tRNA synthetase</keyword>
<keyword id="KW-0067">ATP-binding</keyword>
<keyword id="KW-0963">Cytoplasm</keyword>
<keyword id="KW-0436">Ligase</keyword>
<keyword id="KW-0460">Magnesium</keyword>
<keyword id="KW-0479">Metal-binding</keyword>
<keyword id="KW-0547">Nucleotide-binding</keyword>
<keyword id="KW-0648">Protein biosynthesis</keyword>
<organism>
    <name type="scientific">Burkholderia orbicola (strain MC0-3)</name>
    <dbReference type="NCBI Taxonomy" id="406425"/>
    <lineage>
        <taxon>Bacteria</taxon>
        <taxon>Pseudomonadati</taxon>
        <taxon>Pseudomonadota</taxon>
        <taxon>Betaproteobacteria</taxon>
        <taxon>Burkholderiales</taxon>
        <taxon>Burkholderiaceae</taxon>
        <taxon>Burkholderia</taxon>
        <taxon>Burkholderia cepacia complex</taxon>
        <taxon>Burkholderia orbicola</taxon>
    </lineage>
</organism>
<proteinExistence type="inferred from homology"/>
<sequence length="508" mass="57557">MTEPTQTQPAVTADENQIIAERREKLRALREQGVAYPNDFRPEHHAADLQAKFADSDKAALEANPVEVSVAGRMMLKRVMGKASFATVQDGSGQIQFFVTPNDVGADTYDAFKKWDLGDIVAARGVLFRTNKGELSVQCKELRLLSKALRPLPDKFHGLSDQEMRYRQRYVDLIVTPETRDTFRARTKTIASIRKFMDNADFMEVETPMLHPIPGGAAAKPFVTHHNALDMQMFLRIAPELYLKRLIVGGFERVFEINRNFRNEGVSPRHNPEFTMMEFYAAYTDYRWLMDFTEQLIRQAAIDALGTATIQYQGRELDLAKPFHRLTITQAIQKYAPDYTDGQLSDDAFLRTELKRFGVDVSQPAFLNAGIGALQLALFEETAEAQLWEPTFIIDYPVEVSPLARASDTVPGITERFELFMTGREIANGFSELNDPEDQAARFKKQVEQKDAGDEEAMFFDADYIRALEYGMPPTGGCGIGIDRLVMLLTDSPTIRDVLLFPHLRRED</sequence>
<accession>B1JUZ7</accession>
<name>SYK_BURO0</name>
<comment type="catalytic activity">
    <reaction evidence="1">
        <text>tRNA(Lys) + L-lysine + ATP = L-lysyl-tRNA(Lys) + AMP + diphosphate</text>
        <dbReference type="Rhea" id="RHEA:20792"/>
        <dbReference type="Rhea" id="RHEA-COMP:9696"/>
        <dbReference type="Rhea" id="RHEA-COMP:9697"/>
        <dbReference type="ChEBI" id="CHEBI:30616"/>
        <dbReference type="ChEBI" id="CHEBI:32551"/>
        <dbReference type="ChEBI" id="CHEBI:33019"/>
        <dbReference type="ChEBI" id="CHEBI:78442"/>
        <dbReference type="ChEBI" id="CHEBI:78529"/>
        <dbReference type="ChEBI" id="CHEBI:456215"/>
        <dbReference type="EC" id="6.1.1.6"/>
    </reaction>
</comment>
<comment type="cofactor">
    <cofactor evidence="1">
        <name>Mg(2+)</name>
        <dbReference type="ChEBI" id="CHEBI:18420"/>
    </cofactor>
    <text evidence="1">Binds 3 Mg(2+) ions per subunit.</text>
</comment>
<comment type="subunit">
    <text evidence="1">Homodimer.</text>
</comment>
<comment type="subcellular location">
    <subcellularLocation>
        <location evidence="1">Cytoplasm</location>
    </subcellularLocation>
</comment>
<comment type="similarity">
    <text evidence="1">Belongs to the class-II aminoacyl-tRNA synthetase family.</text>
</comment>
<gene>
    <name evidence="1" type="primary">lysS</name>
    <name type="ordered locus">Bcenmc03_2136</name>
</gene>
<dbReference type="EC" id="6.1.1.6" evidence="1"/>
<dbReference type="EMBL" id="CP000958">
    <property type="protein sequence ID" value="ACA91297.1"/>
    <property type="molecule type" value="Genomic_DNA"/>
</dbReference>
<dbReference type="RefSeq" id="WP_006478395.1">
    <property type="nucleotide sequence ID" value="NC_010508.1"/>
</dbReference>
<dbReference type="SMR" id="B1JUZ7"/>
<dbReference type="GeneID" id="83048919"/>
<dbReference type="KEGG" id="bcm:Bcenmc03_2136"/>
<dbReference type="HOGENOM" id="CLU_008255_6_0_4"/>
<dbReference type="Proteomes" id="UP000002169">
    <property type="component" value="Chromosome 1"/>
</dbReference>
<dbReference type="GO" id="GO:0005829">
    <property type="term" value="C:cytosol"/>
    <property type="evidence" value="ECO:0007669"/>
    <property type="project" value="TreeGrafter"/>
</dbReference>
<dbReference type="GO" id="GO:0005524">
    <property type="term" value="F:ATP binding"/>
    <property type="evidence" value="ECO:0007669"/>
    <property type="project" value="UniProtKB-UniRule"/>
</dbReference>
<dbReference type="GO" id="GO:0004824">
    <property type="term" value="F:lysine-tRNA ligase activity"/>
    <property type="evidence" value="ECO:0007669"/>
    <property type="project" value="UniProtKB-UniRule"/>
</dbReference>
<dbReference type="GO" id="GO:0000287">
    <property type="term" value="F:magnesium ion binding"/>
    <property type="evidence" value="ECO:0007669"/>
    <property type="project" value="UniProtKB-UniRule"/>
</dbReference>
<dbReference type="GO" id="GO:0000049">
    <property type="term" value="F:tRNA binding"/>
    <property type="evidence" value="ECO:0007669"/>
    <property type="project" value="TreeGrafter"/>
</dbReference>
<dbReference type="GO" id="GO:0006430">
    <property type="term" value="P:lysyl-tRNA aminoacylation"/>
    <property type="evidence" value="ECO:0007669"/>
    <property type="project" value="UniProtKB-UniRule"/>
</dbReference>
<dbReference type="CDD" id="cd00775">
    <property type="entry name" value="LysRS_core"/>
    <property type="match status" value="1"/>
</dbReference>
<dbReference type="CDD" id="cd04322">
    <property type="entry name" value="LysRS_N"/>
    <property type="match status" value="1"/>
</dbReference>
<dbReference type="FunFam" id="2.40.50.140:FF:000024">
    <property type="entry name" value="Lysine--tRNA ligase"/>
    <property type="match status" value="1"/>
</dbReference>
<dbReference type="FunFam" id="3.30.930.10:FF:000001">
    <property type="entry name" value="Lysine--tRNA ligase"/>
    <property type="match status" value="1"/>
</dbReference>
<dbReference type="Gene3D" id="3.30.930.10">
    <property type="entry name" value="Bira Bifunctional Protein, Domain 2"/>
    <property type="match status" value="1"/>
</dbReference>
<dbReference type="Gene3D" id="2.40.50.140">
    <property type="entry name" value="Nucleic acid-binding proteins"/>
    <property type="match status" value="1"/>
</dbReference>
<dbReference type="HAMAP" id="MF_00252">
    <property type="entry name" value="Lys_tRNA_synth_class2"/>
    <property type="match status" value="1"/>
</dbReference>
<dbReference type="InterPro" id="IPR004364">
    <property type="entry name" value="Aa-tRNA-synt_II"/>
</dbReference>
<dbReference type="InterPro" id="IPR006195">
    <property type="entry name" value="aa-tRNA-synth_II"/>
</dbReference>
<dbReference type="InterPro" id="IPR045864">
    <property type="entry name" value="aa-tRNA-synth_II/BPL/LPL"/>
</dbReference>
<dbReference type="InterPro" id="IPR002313">
    <property type="entry name" value="Lys-tRNA-ligase_II"/>
</dbReference>
<dbReference type="InterPro" id="IPR044136">
    <property type="entry name" value="Lys-tRNA-ligase_II_N"/>
</dbReference>
<dbReference type="InterPro" id="IPR018149">
    <property type="entry name" value="Lys-tRNA-synth_II_C"/>
</dbReference>
<dbReference type="InterPro" id="IPR012340">
    <property type="entry name" value="NA-bd_OB-fold"/>
</dbReference>
<dbReference type="InterPro" id="IPR004365">
    <property type="entry name" value="NA-bd_OB_tRNA"/>
</dbReference>
<dbReference type="NCBIfam" id="TIGR00499">
    <property type="entry name" value="lysS_bact"/>
    <property type="match status" value="1"/>
</dbReference>
<dbReference type="NCBIfam" id="NF001756">
    <property type="entry name" value="PRK00484.1"/>
    <property type="match status" value="1"/>
</dbReference>
<dbReference type="PANTHER" id="PTHR42918:SF15">
    <property type="entry name" value="LYSINE--TRNA LIGASE, CHLOROPLASTIC_MITOCHONDRIAL"/>
    <property type="match status" value="1"/>
</dbReference>
<dbReference type="PANTHER" id="PTHR42918">
    <property type="entry name" value="LYSYL-TRNA SYNTHETASE"/>
    <property type="match status" value="1"/>
</dbReference>
<dbReference type="Pfam" id="PF00152">
    <property type="entry name" value="tRNA-synt_2"/>
    <property type="match status" value="1"/>
</dbReference>
<dbReference type="Pfam" id="PF01336">
    <property type="entry name" value="tRNA_anti-codon"/>
    <property type="match status" value="1"/>
</dbReference>
<dbReference type="PRINTS" id="PR00982">
    <property type="entry name" value="TRNASYNTHLYS"/>
</dbReference>
<dbReference type="SUPFAM" id="SSF55681">
    <property type="entry name" value="Class II aaRS and biotin synthetases"/>
    <property type="match status" value="1"/>
</dbReference>
<dbReference type="SUPFAM" id="SSF50249">
    <property type="entry name" value="Nucleic acid-binding proteins"/>
    <property type="match status" value="1"/>
</dbReference>
<dbReference type="PROSITE" id="PS50862">
    <property type="entry name" value="AA_TRNA_LIGASE_II"/>
    <property type="match status" value="1"/>
</dbReference>
<reference key="1">
    <citation type="submission" date="2008-02" db="EMBL/GenBank/DDBJ databases">
        <title>Complete sequence of chromosome 1 of Burkholderia cenocepacia MC0-3.</title>
        <authorList>
            <person name="Copeland A."/>
            <person name="Lucas S."/>
            <person name="Lapidus A."/>
            <person name="Barry K."/>
            <person name="Bruce D."/>
            <person name="Goodwin L."/>
            <person name="Glavina del Rio T."/>
            <person name="Dalin E."/>
            <person name="Tice H."/>
            <person name="Pitluck S."/>
            <person name="Chain P."/>
            <person name="Malfatti S."/>
            <person name="Shin M."/>
            <person name="Vergez L."/>
            <person name="Schmutz J."/>
            <person name="Larimer F."/>
            <person name="Land M."/>
            <person name="Hauser L."/>
            <person name="Kyrpides N."/>
            <person name="Mikhailova N."/>
            <person name="Tiedje J."/>
            <person name="Richardson P."/>
        </authorList>
    </citation>
    <scope>NUCLEOTIDE SEQUENCE [LARGE SCALE GENOMIC DNA]</scope>
    <source>
        <strain>MC0-3</strain>
    </source>
</reference>
<protein>
    <recommendedName>
        <fullName evidence="1">Lysine--tRNA ligase</fullName>
        <ecNumber evidence="1">6.1.1.6</ecNumber>
    </recommendedName>
    <alternativeName>
        <fullName evidence="1">Lysyl-tRNA synthetase</fullName>
        <shortName evidence="1">LysRS</shortName>
    </alternativeName>
</protein>